<keyword id="KW-1185">Reference proteome</keyword>
<keyword id="KW-0687">Ribonucleoprotein</keyword>
<keyword id="KW-0689">Ribosomal protein</keyword>
<keyword id="KW-0694">RNA-binding</keyword>
<keyword id="KW-0699">rRNA-binding</keyword>
<keyword id="KW-0820">tRNA-binding</keyword>
<name>RS13_PARD8</name>
<sequence>MAIRIVGVDLPQNKRGEIALTYIYGIGRSAAKSVLDKAGVDRDIKVKDWTDDQAAKVREVIGAEYKVEGDLRSEVQLNIKRLMDIGCYRGVRHRVGLPLRGQSTKNNARTRKGKKKTVANKKKATK</sequence>
<accession>A6LEG8</accession>
<feature type="chain" id="PRO_0000306668" description="Small ribosomal subunit protein uS13">
    <location>
        <begin position="1"/>
        <end position="126"/>
    </location>
</feature>
<feature type="region of interest" description="Disordered" evidence="2">
    <location>
        <begin position="98"/>
        <end position="126"/>
    </location>
</feature>
<feature type="compositionally biased region" description="Basic residues" evidence="2">
    <location>
        <begin position="108"/>
        <end position="126"/>
    </location>
</feature>
<reference key="1">
    <citation type="journal article" date="2007" name="PLoS Biol.">
        <title>Evolution of symbiotic bacteria in the distal human intestine.</title>
        <authorList>
            <person name="Xu J."/>
            <person name="Mahowald M.A."/>
            <person name="Ley R.E."/>
            <person name="Lozupone C.A."/>
            <person name="Hamady M."/>
            <person name="Martens E.C."/>
            <person name="Henrissat B."/>
            <person name="Coutinho P.M."/>
            <person name="Minx P."/>
            <person name="Latreille P."/>
            <person name="Cordum H."/>
            <person name="Van Brunt A."/>
            <person name="Kim K."/>
            <person name="Fulton R.S."/>
            <person name="Fulton L.A."/>
            <person name="Clifton S.W."/>
            <person name="Wilson R.K."/>
            <person name="Knight R.D."/>
            <person name="Gordon J.I."/>
        </authorList>
    </citation>
    <scope>NUCLEOTIDE SEQUENCE [LARGE SCALE GENOMIC DNA]</scope>
    <source>
        <strain>ATCC 8503 / DSM 20701 / CIP 104284 / JCM 5825 / NCTC 11152</strain>
    </source>
</reference>
<dbReference type="EMBL" id="CP000140">
    <property type="protein sequence ID" value="ABR44082.1"/>
    <property type="molecule type" value="Genomic_DNA"/>
</dbReference>
<dbReference type="RefSeq" id="WP_008779937.1">
    <property type="nucleotide sequence ID" value="NZ_LR215978.1"/>
</dbReference>
<dbReference type="SMR" id="A6LEG8"/>
<dbReference type="STRING" id="435591.BDI_2357"/>
<dbReference type="PaxDb" id="435591-BDI_2357"/>
<dbReference type="KEGG" id="pdi:BDI_2357"/>
<dbReference type="eggNOG" id="COG0099">
    <property type="taxonomic scope" value="Bacteria"/>
</dbReference>
<dbReference type="HOGENOM" id="CLU_103849_1_2_10"/>
<dbReference type="BioCyc" id="PDIS435591:G1G5A-2421-MONOMER"/>
<dbReference type="Proteomes" id="UP000000566">
    <property type="component" value="Chromosome"/>
</dbReference>
<dbReference type="GO" id="GO:0005829">
    <property type="term" value="C:cytosol"/>
    <property type="evidence" value="ECO:0007669"/>
    <property type="project" value="TreeGrafter"/>
</dbReference>
<dbReference type="GO" id="GO:0015935">
    <property type="term" value="C:small ribosomal subunit"/>
    <property type="evidence" value="ECO:0007669"/>
    <property type="project" value="TreeGrafter"/>
</dbReference>
<dbReference type="GO" id="GO:0019843">
    <property type="term" value="F:rRNA binding"/>
    <property type="evidence" value="ECO:0007669"/>
    <property type="project" value="UniProtKB-UniRule"/>
</dbReference>
<dbReference type="GO" id="GO:0003735">
    <property type="term" value="F:structural constituent of ribosome"/>
    <property type="evidence" value="ECO:0007669"/>
    <property type="project" value="InterPro"/>
</dbReference>
<dbReference type="GO" id="GO:0000049">
    <property type="term" value="F:tRNA binding"/>
    <property type="evidence" value="ECO:0007669"/>
    <property type="project" value="UniProtKB-UniRule"/>
</dbReference>
<dbReference type="GO" id="GO:0006412">
    <property type="term" value="P:translation"/>
    <property type="evidence" value="ECO:0007669"/>
    <property type="project" value="UniProtKB-UniRule"/>
</dbReference>
<dbReference type="FunFam" id="1.10.8.50:FF:000001">
    <property type="entry name" value="30S ribosomal protein S13"/>
    <property type="match status" value="1"/>
</dbReference>
<dbReference type="FunFam" id="4.10.910.10:FF:000001">
    <property type="entry name" value="30S ribosomal protein S13"/>
    <property type="match status" value="1"/>
</dbReference>
<dbReference type="Gene3D" id="1.10.8.50">
    <property type="match status" value="1"/>
</dbReference>
<dbReference type="Gene3D" id="4.10.910.10">
    <property type="entry name" value="30s ribosomal protein s13, domain 2"/>
    <property type="match status" value="1"/>
</dbReference>
<dbReference type="HAMAP" id="MF_01315">
    <property type="entry name" value="Ribosomal_uS13"/>
    <property type="match status" value="1"/>
</dbReference>
<dbReference type="InterPro" id="IPR027437">
    <property type="entry name" value="Rbsml_uS13_C"/>
</dbReference>
<dbReference type="InterPro" id="IPR001892">
    <property type="entry name" value="Ribosomal_uS13"/>
</dbReference>
<dbReference type="InterPro" id="IPR010979">
    <property type="entry name" value="Ribosomal_uS13-like_H2TH"/>
</dbReference>
<dbReference type="InterPro" id="IPR019980">
    <property type="entry name" value="Ribosomal_uS13_bac-type"/>
</dbReference>
<dbReference type="InterPro" id="IPR018269">
    <property type="entry name" value="Ribosomal_uS13_CS"/>
</dbReference>
<dbReference type="NCBIfam" id="TIGR03631">
    <property type="entry name" value="uS13_bact"/>
    <property type="match status" value="1"/>
</dbReference>
<dbReference type="PANTHER" id="PTHR10871">
    <property type="entry name" value="30S RIBOSOMAL PROTEIN S13/40S RIBOSOMAL PROTEIN S18"/>
    <property type="match status" value="1"/>
</dbReference>
<dbReference type="PANTHER" id="PTHR10871:SF1">
    <property type="entry name" value="SMALL RIBOSOMAL SUBUNIT PROTEIN US13M"/>
    <property type="match status" value="1"/>
</dbReference>
<dbReference type="Pfam" id="PF00416">
    <property type="entry name" value="Ribosomal_S13"/>
    <property type="match status" value="1"/>
</dbReference>
<dbReference type="PIRSF" id="PIRSF002134">
    <property type="entry name" value="Ribosomal_S13"/>
    <property type="match status" value="1"/>
</dbReference>
<dbReference type="SUPFAM" id="SSF46946">
    <property type="entry name" value="S13-like H2TH domain"/>
    <property type="match status" value="1"/>
</dbReference>
<dbReference type="PROSITE" id="PS00646">
    <property type="entry name" value="RIBOSOMAL_S13_1"/>
    <property type="match status" value="1"/>
</dbReference>
<dbReference type="PROSITE" id="PS50159">
    <property type="entry name" value="RIBOSOMAL_S13_2"/>
    <property type="match status" value="1"/>
</dbReference>
<comment type="function">
    <text evidence="1">Located at the top of the head of the 30S subunit, it contacts several helices of the 16S rRNA. In the 70S ribosome it contacts the 23S rRNA (bridge B1a) and protein L5 of the 50S subunit (bridge B1b), connecting the 2 subunits; these bridges are implicated in subunit movement. Contacts the tRNAs in the A and P-sites.</text>
</comment>
<comment type="subunit">
    <text evidence="1">Part of the 30S ribosomal subunit. Forms a loose heterodimer with protein S19. Forms two bridges to the 50S subunit in the 70S ribosome.</text>
</comment>
<comment type="similarity">
    <text evidence="1">Belongs to the universal ribosomal protein uS13 family.</text>
</comment>
<protein>
    <recommendedName>
        <fullName evidence="1">Small ribosomal subunit protein uS13</fullName>
    </recommendedName>
    <alternativeName>
        <fullName evidence="3">30S ribosomal protein S13</fullName>
    </alternativeName>
</protein>
<gene>
    <name evidence="1" type="primary">rpsM</name>
    <name type="ordered locus">BDI_2357</name>
</gene>
<proteinExistence type="inferred from homology"/>
<organism>
    <name type="scientific">Parabacteroides distasonis (strain ATCC 8503 / DSM 20701 / CIP 104284 / JCM 5825 / NCTC 11152)</name>
    <dbReference type="NCBI Taxonomy" id="435591"/>
    <lineage>
        <taxon>Bacteria</taxon>
        <taxon>Pseudomonadati</taxon>
        <taxon>Bacteroidota</taxon>
        <taxon>Bacteroidia</taxon>
        <taxon>Bacteroidales</taxon>
        <taxon>Tannerellaceae</taxon>
        <taxon>Parabacteroides</taxon>
    </lineage>
</organism>
<evidence type="ECO:0000255" key="1">
    <source>
        <dbReference type="HAMAP-Rule" id="MF_01315"/>
    </source>
</evidence>
<evidence type="ECO:0000256" key="2">
    <source>
        <dbReference type="SAM" id="MobiDB-lite"/>
    </source>
</evidence>
<evidence type="ECO:0000305" key="3"/>